<evidence type="ECO:0000255" key="1">
    <source>
        <dbReference type="HAMAP-Rule" id="MF_00081"/>
    </source>
</evidence>
<protein>
    <recommendedName>
        <fullName evidence="1">Heat-inducible transcription repressor HrcA</fullName>
    </recommendedName>
</protein>
<gene>
    <name evidence="1" type="primary">hrcA</name>
    <name type="ordered locus">LHK_01206</name>
</gene>
<dbReference type="EMBL" id="CP001154">
    <property type="protein sequence ID" value="ACO74197.1"/>
    <property type="molecule type" value="Genomic_DNA"/>
</dbReference>
<dbReference type="RefSeq" id="WP_012696684.1">
    <property type="nucleotide sequence ID" value="NC_012559.1"/>
</dbReference>
<dbReference type="SMR" id="C1D6U0"/>
<dbReference type="STRING" id="557598.LHK_01206"/>
<dbReference type="GeneID" id="75110551"/>
<dbReference type="KEGG" id="lhk:LHK_01206"/>
<dbReference type="eggNOG" id="COG1420">
    <property type="taxonomic scope" value="Bacteria"/>
</dbReference>
<dbReference type="HOGENOM" id="CLU_050019_0_0_4"/>
<dbReference type="Proteomes" id="UP000002010">
    <property type="component" value="Chromosome"/>
</dbReference>
<dbReference type="GO" id="GO:0003677">
    <property type="term" value="F:DNA binding"/>
    <property type="evidence" value="ECO:0007669"/>
    <property type="project" value="InterPro"/>
</dbReference>
<dbReference type="GO" id="GO:0045892">
    <property type="term" value="P:negative regulation of DNA-templated transcription"/>
    <property type="evidence" value="ECO:0007669"/>
    <property type="project" value="UniProtKB-UniRule"/>
</dbReference>
<dbReference type="Gene3D" id="3.30.450.40">
    <property type="match status" value="1"/>
</dbReference>
<dbReference type="Gene3D" id="3.30.390.60">
    <property type="entry name" value="Heat-inducible transcription repressor hrca homolog, domain 3"/>
    <property type="match status" value="1"/>
</dbReference>
<dbReference type="Gene3D" id="1.10.10.10">
    <property type="entry name" value="Winged helix-like DNA-binding domain superfamily/Winged helix DNA-binding domain"/>
    <property type="match status" value="1"/>
</dbReference>
<dbReference type="HAMAP" id="MF_00081">
    <property type="entry name" value="HrcA"/>
    <property type="match status" value="1"/>
</dbReference>
<dbReference type="InterPro" id="IPR029016">
    <property type="entry name" value="GAF-like_dom_sf"/>
</dbReference>
<dbReference type="InterPro" id="IPR002571">
    <property type="entry name" value="HrcA"/>
</dbReference>
<dbReference type="InterPro" id="IPR021153">
    <property type="entry name" value="HrcA_C"/>
</dbReference>
<dbReference type="InterPro" id="IPR036388">
    <property type="entry name" value="WH-like_DNA-bd_sf"/>
</dbReference>
<dbReference type="InterPro" id="IPR036390">
    <property type="entry name" value="WH_DNA-bd_sf"/>
</dbReference>
<dbReference type="InterPro" id="IPR005104">
    <property type="entry name" value="WHTH_HrcA_DNA-bd"/>
</dbReference>
<dbReference type="InterPro" id="IPR023120">
    <property type="entry name" value="WHTH_transcript_rep_HrcA_IDD"/>
</dbReference>
<dbReference type="NCBIfam" id="TIGR00331">
    <property type="entry name" value="hrcA"/>
    <property type="match status" value="1"/>
</dbReference>
<dbReference type="PANTHER" id="PTHR34824">
    <property type="entry name" value="HEAT-INDUCIBLE TRANSCRIPTION REPRESSOR HRCA"/>
    <property type="match status" value="1"/>
</dbReference>
<dbReference type="PANTHER" id="PTHR34824:SF1">
    <property type="entry name" value="HEAT-INDUCIBLE TRANSCRIPTION REPRESSOR HRCA"/>
    <property type="match status" value="1"/>
</dbReference>
<dbReference type="Pfam" id="PF01628">
    <property type="entry name" value="HrcA"/>
    <property type="match status" value="1"/>
</dbReference>
<dbReference type="Pfam" id="PF03444">
    <property type="entry name" value="HrcA_DNA-bdg"/>
    <property type="match status" value="1"/>
</dbReference>
<dbReference type="PIRSF" id="PIRSF005485">
    <property type="entry name" value="HrcA"/>
    <property type="match status" value="1"/>
</dbReference>
<dbReference type="SUPFAM" id="SSF55781">
    <property type="entry name" value="GAF domain-like"/>
    <property type="match status" value="1"/>
</dbReference>
<dbReference type="SUPFAM" id="SSF46785">
    <property type="entry name" value="Winged helix' DNA-binding domain"/>
    <property type="match status" value="1"/>
</dbReference>
<name>HRCA_LARHH</name>
<feature type="chain" id="PRO_1000118303" description="Heat-inducible transcription repressor HrcA">
    <location>
        <begin position="1"/>
        <end position="347"/>
    </location>
</feature>
<comment type="function">
    <text evidence="1">Negative regulator of class I heat shock genes (grpE-dnaK-dnaJ and groELS operons). Prevents heat-shock induction of these operons.</text>
</comment>
<comment type="similarity">
    <text evidence="1">Belongs to the HrcA family.</text>
</comment>
<accession>C1D6U0</accession>
<keyword id="KW-1185">Reference proteome</keyword>
<keyword id="KW-0678">Repressor</keyword>
<keyword id="KW-0346">Stress response</keyword>
<keyword id="KW-0804">Transcription</keyword>
<keyword id="KW-0805">Transcription regulation</keyword>
<proteinExistence type="inferred from homology"/>
<organism>
    <name type="scientific">Laribacter hongkongensis (strain HLHK9)</name>
    <dbReference type="NCBI Taxonomy" id="557598"/>
    <lineage>
        <taxon>Bacteria</taxon>
        <taxon>Pseudomonadati</taxon>
        <taxon>Pseudomonadota</taxon>
        <taxon>Betaproteobacteria</taxon>
        <taxon>Neisseriales</taxon>
        <taxon>Aquaspirillaceae</taxon>
        <taxon>Laribacter</taxon>
    </lineage>
</organism>
<sequence>MLNDRAQRLLKTLVERYIADGQPVGSRTLTQLSGLDISPASVRNVMAELEDMGLVASPHTSAGRVPTARGYRVFVDKLLTMHPLEQQALRQVESGIHPDSPLRMAAAASQLLSDLTHFAGVVITPQRADAAFRQIEFLRLSEKRILLILVTPLGDVQNHLLVTDRDYTPGELIETANYLNHHYAGQSLEHITRDLEQELASLQGHIARLMTAAIHASKEATSQDDIVVSGEKRLLSVEELSSDLASLRRLFDMFEHKTELLHLLNISRQAQGVSLFIGEESGLSPLDGCTVVTAPYTFDGTRVGTLGVVGPTRMNYERVIPIVDITARLVSSALSSPLSGSDAPSSH</sequence>
<reference key="1">
    <citation type="journal article" date="2009" name="PLoS Genet.">
        <title>The complete genome and proteome of Laribacter hongkongensis reveal potential mechanisms for adaptations to different temperatures and habitats.</title>
        <authorList>
            <person name="Woo P.C.Y."/>
            <person name="Lau S.K.P."/>
            <person name="Tse H."/>
            <person name="Teng J.L.L."/>
            <person name="Curreem S.O."/>
            <person name="Tsang A.K.L."/>
            <person name="Fan R.Y.Y."/>
            <person name="Wong G.K.M."/>
            <person name="Huang Y."/>
            <person name="Loman N.J."/>
            <person name="Snyder L.A.S."/>
            <person name="Cai J.J."/>
            <person name="Huang J.-D."/>
            <person name="Mak W."/>
            <person name="Pallen M.J."/>
            <person name="Lok S."/>
            <person name="Yuen K.-Y."/>
        </authorList>
    </citation>
    <scope>NUCLEOTIDE SEQUENCE [LARGE SCALE GENOMIC DNA]</scope>
    <source>
        <strain>HLHK9</strain>
    </source>
</reference>